<feature type="chain" id="PRO_0000429068" description="Protein-glutamate methylesterase/protein-glutamine glutaminase">
    <location>
        <begin position="1"/>
        <end position="347"/>
    </location>
</feature>
<feature type="domain" description="Response regulatory" evidence="1">
    <location>
        <begin position="3"/>
        <end position="119"/>
    </location>
</feature>
<feature type="domain" description="CheB-type methylesterase" evidence="1">
    <location>
        <begin position="152"/>
        <end position="346"/>
    </location>
</feature>
<feature type="region of interest" description="Disordered" evidence="2">
    <location>
        <begin position="132"/>
        <end position="154"/>
    </location>
</feature>
<feature type="active site" evidence="1">
    <location>
        <position position="164"/>
    </location>
</feature>
<feature type="active site" evidence="1">
    <location>
        <position position="191"/>
    </location>
</feature>
<feature type="active site" evidence="1">
    <location>
        <position position="288"/>
    </location>
</feature>
<feature type="modified residue" description="4-aspartylphosphate" evidence="1">
    <location>
        <position position="53"/>
    </location>
</feature>
<feature type="sequence conflict" description="In Ref. 1; CAA60162." evidence="5" ref="1">
    <original>A</original>
    <variation>P</variation>
    <location>
        <position position="295"/>
    </location>
</feature>
<sequence>MTEALVVDDSHFMRTVISDILEDGGVDVVGTAENGARALDAVTDVQPDVITMDVEMPEMDGIEATAEIMREQPTPILMVSALTTEDADATLEAMEKGAIDTFAKPGGTISTELSGHSEELVAAVERVASADPTAGHDVEMEPASPPDATTSEYADNPTLLIGASTGGPNVVESILASLPAEADFRVLIVQHMPDQFTSRFADRLDAASQYDITEAEDGSRIGGGEGLVARGDYHMRVSGYSNGRLRVRLDQSERLHSVRPAIDVTFKSAAERVTDPLVSVVLTGMGSDGADGVRAVKDAGGATLAQNEATSAVFGIPERAIETGCVDDVLPVDQLTEAIADSIRRTT</sequence>
<comment type="function">
    <text evidence="3">Involved in the modulation of the chemotaxis system; catalyzes the demethylation of specific methylglutamate residues introduced into the Htr transducer proteins (methyl-accepting chemotaxis proteins) by CheR. Also required for Htr deamidations, at least at a specific glutamine-glutamate pair in HTR-II and a specific aspartate-glutamine pair in Htr4.</text>
</comment>
<comment type="catalytic activity">
    <reaction evidence="1 3">
        <text>[protein]-L-glutamate 5-O-methyl ester + H2O = L-glutamyl-[protein] + methanol + H(+)</text>
        <dbReference type="Rhea" id="RHEA:23236"/>
        <dbReference type="Rhea" id="RHEA-COMP:10208"/>
        <dbReference type="Rhea" id="RHEA-COMP:10311"/>
        <dbReference type="ChEBI" id="CHEBI:15377"/>
        <dbReference type="ChEBI" id="CHEBI:15378"/>
        <dbReference type="ChEBI" id="CHEBI:17790"/>
        <dbReference type="ChEBI" id="CHEBI:29973"/>
        <dbReference type="ChEBI" id="CHEBI:82795"/>
        <dbReference type="EC" id="3.1.1.61"/>
    </reaction>
</comment>
<comment type="catalytic activity">
    <reaction evidence="1 3">
        <text>L-glutaminyl-[protein] + H2O = L-glutamyl-[protein] + NH4(+)</text>
        <dbReference type="Rhea" id="RHEA:16441"/>
        <dbReference type="Rhea" id="RHEA-COMP:10207"/>
        <dbReference type="Rhea" id="RHEA-COMP:10208"/>
        <dbReference type="ChEBI" id="CHEBI:15377"/>
        <dbReference type="ChEBI" id="CHEBI:28938"/>
        <dbReference type="ChEBI" id="CHEBI:29973"/>
        <dbReference type="ChEBI" id="CHEBI:30011"/>
        <dbReference type="EC" id="3.5.1.44"/>
    </reaction>
</comment>
<comment type="subcellular location">
    <subcellularLocation>
        <location evidence="1">Cytoplasm</location>
    </subcellularLocation>
</comment>
<comment type="domain">
    <text evidence="1">Contains a C-terminal catalytic domain, and an N-terminal region which modulates catalytic activity.</text>
</comment>
<comment type="PTM">
    <text evidence="1">Phosphorylated by CheA. Phosphorylation of the N-terminal regulatory domain activates the methylesterase activity.</text>
</comment>
<comment type="disruption phenotype">
    <text evidence="3 4">Deletion leads to the loss of both chemotactic and phototactic responses. Mutants show increased methylation of the Htr transducer proteins.</text>
</comment>
<comment type="similarity">
    <text evidence="1">Belongs to the CheB family.</text>
</comment>
<keyword id="KW-0145">Chemotaxis</keyword>
<keyword id="KW-0963">Cytoplasm</keyword>
<keyword id="KW-0378">Hydrolase</keyword>
<keyword id="KW-0597">Phosphoprotein</keyword>
<reference key="1">
    <citation type="journal article" date="1995" name="EMBO J.">
        <title>Phosphorylation in halobacterial signal transduction.</title>
        <authorList>
            <person name="Rudolph J."/>
            <person name="Tolliday N."/>
            <person name="Schmitt C."/>
            <person name="Schuster S.C."/>
            <person name="Oesterhelt D."/>
        </authorList>
    </citation>
    <scope>NUCLEOTIDE SEQUENCE [GENOMIC DNA]</scope>
    <source>
        <strain>R1 / S9 / D2</strain>
    </source>
</reference>
<reference key="2">
    <citation type="journal article" date="2008" name="Genomics">
        <title>Evolution in the laboratory: the genome of Halobacterium salinarum strain R1 compared to that of strain NRC-1.</title>
        <authorList>
            <person name="Pfeiffer F."/>
            <person name="Schuster S.C."/>
            <person name="Broicher A."/>
            <person name="Falb M."/>
            <person name="Palm P."/>
            <person name="Rodewald K."/>
            <person name="Ruepp A."/>
            <person name="Soppa J."/>
            <person name="Tittor J."/>
            <person name="Oesterhelt D."/>
        </authorList>
    </citation>
    <scope>NUCLEOTIDE SEQUENCE [LARGE SCALE GENOMIC DNA]</scope>
    <source>
        <strain>ATCC 29341 / DSM 671 / R1</strain>
    </source>
</reference>
<reference key="3">
    <citation type="journal article" date="1996" name="J. Mol. Biol.">
        <title>Deletion analysis of the che operon in the archaeon Halobacterium salinarium.</title>
        <authorList>
            <person name="Rudolph J."/>
            <person name="Oesterhelt D."/>
        </authorList>
    </citation>
    <scope>DISRUPTION PHENOTYPE</scope>
</reference>
<reference key="4">
    <citation type="journal article" date="2008" name="J. Mol. Biol.">
        <title>Physiological sites of deamidation and methyl esterification in sensory transducers of Halobacterium salinarum.</title>
        <authorList>
            <person name="Koch M.K."/>
            <person name="Staudinger W.F."/>
            <person name="Siedler F."/>
            <person name="Oesterhelt D."/>
        </authorList>
    </citation>
    <scope>FUNCTION</scope>
    <scope>CATALYTIC ACTIVITY</scope>
    <scope>DISRUPTION PHENOTYPE</scope>
    <source>
        <strain>R1 / S9</strain>
    </source>
</reference>
<evidence type="ECO:0000255" key="1">
    <source>
        <dbReference type="HAMAP-Rule" id="MF_00099"/>
    </source>
</evidence>
<evidence type="ECO:0000256" key="2">
    <source>
        <dbReference type="SAM" id="MobiDB-lite"/>
    </source>
</evidence>
<evidence type="ECO:0000269" key="3">
    <source>
    </source>
</evidence>
<evidence type="ECO:0000269" key="4">
    <source>
    </source>
</evidence>
<evidence type="ECO:0000305" key="5"/>
<organism>
    <name type="scientific">Halobacterium salinarum (strain ATCC 29341 / DSM 671 / R1)</name>
    <dbReference type="NCBI Taxonomy" id="478009"/>
    <lineage>
        <taxon>Archaea</taxon>
        <taxon>Methanobacteriati</taxon>
        <taxon>Methanobacteriota</taxon>
        <taxon>Stenosarchaea group</taxon>
        <taxon>Halobacteria</taxon>
        <taxon>Halobacteriales</taxon>
        <taxon>Halobacteriaceae</taxon>
        <taxon>Halobacterium</taxon>
        <taxon>Halobacterium salinarum NRC-34001</taxon>
    </lineage>
</organism>
<accession>B0R4K0</accession>
<accession>Q48300</accession>
<accession>Q9HQW6</accession>
<dbReference type="EC" id="3.1.1.61" evidence="1"/>
<dbReference type="EC" id="3.5.1.44" evidence="1"/>
<dbReference type="EMBL" id="X86407">
    <property type="protein sequence ID" value="CAA60162.1"/>
    <property type="molecule type" value="Genomic_DNA"/>
</dbReference>
<dbReference type="EMBL" id="AM774415">
    <property type="protein sequence ID" value="CAP13665.1"/>
    <property type="molecule type" value="Genomic_DNA"/>
</dbReference>
<dbReference type="PIR" id="S58646">
    <property type="entry name" value="S58646"/>
</dbReference>
<dbReference type="RefSeq" id="WP_010902691.1">
    <property type="nucleotide sequence ID" value="NC_010364.1"/>
</dbReference>
<dbReference type="SMR" id="B0R4K0"/>
<dbReference type="EnsemblBacteria" id="CAP13665">
    <property type="protein sequence ID" value="CAP13665"/>
    <property type="gene ID" value="OE_2416R"/>
</dbReference>
<dbReference type="GeneID" id="68693777"/>
<dbReference type="KEGG" id="hsl:OE_2416R"/>
<dbReference type="HOGENOM" id="CLU_000445_51_0_2"/>
<dbReference type="PhylomeDB" id="B0R4K0"/>
<dbReference type="Proteomes" id="UP000001321">
    <property type="component" value="Chromosome"/>
</dbReference>
<dbReference type="GO" id="GO:0005737">
    <property type="term" value="C:cytoplasm"/>
    <property type="evidence" value="ECO:0007669"/>
    <property type="project" value="UniProtKB-SubCell"/>
</dbReference>
<dbReference type="GO" id="GO:0000156">
    <property type="term" value="F:phosphorelay response regulator activity"/>
    <property type="evidence" value="ECO:0007669"/>
    <property type="project" value="InterPro"/>
</dbReference>
<dbReference type="GO" id="GO:0008984">
    <property type="term" value="F:protein-glutamate methylesterase activity"/>
    <property type="evidence" value="ECO:0007669"/>
    <property type="project" value="UniProtKB-UniRule"/>
</dbReference>
<dbReference type="GO" id="GO:0050568">
    <property type="term" value="F:protein-glutamine glutaminase activity"/>
    <property type="evidence" value="ECO:0007669"/>
    <property type="project" value="UniProtKB-UniRule"/>
</dbReference>
<dbReference type="GO" id="GO:0006935">
    <property type="term" value="P:chemotaxis"/>
    <property type="evidence" value="ECO:0007669"/>
    <property type="project" value="UniProtKB-UniRule"/>
</dbReference>
<dbReference type="CDD" id="cd16432">
    <property type="entry name" value="CheB_Rec"/>
    <property type="match status" value="1"/>
</dbReference>
<dbReference type="CDD" id="cd17541">
    <property type="entry name" value="REC_CheB-like"/>
    <property type="match status" value="1"/>
</dbReference>
<dbReference type="Gene3D" id="3.40.50.2300">
    <property type="match status" value="1"/>
</dbReference>
<dbReference type="Gene3D" id="3.40.50.180">
    <property type="entry name" value="Methylesterase CheB, C-terminal domain"/>
    <property type="match status" value="1"/>
</dbReference>
<dbReference type="HAMAP" id="MF_00099">
    <property type="entry name" value="CheB_chemtxs"/>
    <property type="match status" value="1"/>
</dbReference>
<dbReference type="InterPro" id="IPR008248">
    <property type="entry name" value="CheB-like"/>
</dbReference>
<dbReference type="InterPro" id="IPR035909">
    <property type="entry name" value="CheB_C"/>
</dbReference>
<dbReference type="InterPro" id="IPR011006">
    <property type="entry name" value="CheY-like_superfamily"/>
</dbReference>
<dbReference type="InterPro" id="IPR000673">
    <property type="entry name" value="Sig_transdc_resp-reg_Me-estase"/>
</dbReference>
<dbReference type="InterPro" id="IPR001789">
    <property type="entry name" value="Sig_transdc_resp-reg_receiver"/>
</dbReference>
<dbReference type="NCBIfam" id="NF001965">
    <property type="entry name" value="PRK00742.1"/>
    <property type="match status" value="1"/>
</dbReference>
<dbReference type="PANTHER" id="PTHR42872">
    <property type="entry name" value="PROTEIN-GLUTAMATE METHYLESTERASE/PROTEIN-GLUTAMINE GLUTAMINASE"/>
    <property type="match status" value="1"/>
</dbReference>
<dbReference type="PANTHER" id="PTHR42872:SF6">
    <property type="entry name" value="PROTEIN-GLUTAMATE METHYLESTERASE_PROTEIN-GLUTAMINE GLUTAMINASE"/>
    <property type="match status" value="1"/>
</dbReference>
<dbReference type="Pfam" id="PF01339">
    <property type="entry name" value="CheB_methylest"/>
    <property type="match status" value="1"/>
</dbReference>
<dbReference type="Pfam" id="PF00072">
    <property type="entry name" value="Response_reg"/>
    <property type="match status" value="1"/>
</dbReference>
<dbReference type="PIRSF" id="PIRSF000876">
    <property type="entry name" value="RR_chemtxs_CheB"/>
    <property type="match status" value="1"/>
</dbReference>
<dbReference type="SMART" id="SM00448">
    <property type="entry name" value="REC"/>
    <property type="match status" value="1"/>
</dbReference>
<dbReference type="SUPFAM" id="SSF52172">
    <property type="entry name" value="CheY-like"/>
    <property type="match status" value="1"/>
</dbReference>
<dbReference type="SUPFAM" id="SSF52738">
    <property type="entry name" value="Methylesterase CheB, C-terminal domain"/>
    <property type="match status" value="1"/>
</dbReference>
<dbReference type="PROSITE" id="PS50122">
    <property type="entry name" value="CHEB"/>
    <property type="match status" value="1"/>
</dbReference>
<dbReference type="PROSITE" id="PS50110">
    <property type="entry name" value="RESPONSE_REGULATORY"/>
    <property type="match status" value="1"/>
</dbReference>
<protein>
    <recommendedName>
        <fullName evidence="1">Protein-glutamate methylesterase/protein-glutamine glutaminase</fullName>
        <ecNumber evidence="1">3.1.1.61</ecNumber>
        <ecNumber evidence="1">3.5.1.44</ecNumber>
    </recommendedName>
</protein>
<proteinExistence type="evidence at protein level"/>
<gene>
    <name evidence="1" type="primary">cheB</name>
    <name type="ordered locus">OE_2416R</name>
</gene>
<name>CHEB_HALS3</name>